<gene>
    <name type="primary">mrcA</name>
    <name type="synonym">ponA</name>
    <name type="ordered locus">RP807</name>
</gene>
<feature type="chain" id="PRO_0000083174" description="Penicillin-binding protein 1A">
    <location>
        <begin position="1"/>
        <end position="787"/>
    </location>
</feature>
<feature type="topological domain" description="Cytoplasmic" evidence="4">
    <location>
        <begin position="1"/>
        <end position="6"/>
    </location>
</feature>
<feature type="transmembrane region" description="Helical; Signal-anchor for type II membrane protein" evidence="4">
    <location>
        <begin position="7"/>
        <end position="27"/>
    </location>
</feature>
<feature type="topological domain" description="Periplasmic" evidence="4">
    <location>
        <begin position="28"/>
        <end position="787"/>
    </location>
</feature>
<feature type="region of interest" description="Transglycosylase">
    <location>
        <begin position="49"/>
        <end position="220"/>
    </location>
</feature>
<feature type="region of interest" description="Transpeptidase">
    <location>
        <begin position="398"/>
        <end position="711"/>
    </location>
</feature>
<feature type="active site" description="Proton donor; for transglycosylase activity" evidence="3">
    <location>
        <position position="87"/>
    </location>
</feature>
<feature type="active site" description="Acyl-ester intermediate; for transpeptidase activity" evidence="3">
    <location>
        <position position="457"/>
    </location>
</feature>
<accession>Q9ZCE9</accession>
<sequence length="787" mass="88694">MYKSLFLCLKIFAVLILIGCSVTAYIIYHYSHDLPDYSQLARYYPPSVTRIYSRDGKLIEEYAFERRVFVPINNVPSSLIESFIAAEDKNFYTHPGIDLLGIVRAAFLNISNYLHNRRMEGASTITQQVVKNFLLTNEVSLERKIKEVIISYMISRIFTKHQILELYLNQTFFGRGAYGVAAAAQNYFNKSVEELTIAESAFIAALPKAPSELNPDKNYSRVKARRDYVIERMFEDGYITRDTMKEAIGSPIVLRKRAKEETVTADYYAEQVREEVIRMLNSKEEFYRGGLTIITSLDAKMQQLAENSLRKGLREFDRKSGFRKPIANIPLDNWQEELKKLPTPSSLLEYKLAVVLDVSDNHAKIGLIDGSKAKIPIVEMQWARSNLKSVKTLLKKGDVIVVEPIKDCYALRQIPEVNGAIMVMNPHTGQVLASVGGYDFSTSKFDRVTQALRQPGSLSKTFVYLAALENGVKPNQIFNDGPIEIIQGPGMPSWCPKNYEGQFLGDMTMRTGFEKSRNLITVRVATAVGLTKIVDIIKRFGINNEPKKVYSMVLGSIETTLSRITNAYAIIANGGKKVEPHFVELIQDRNGKIIYRRDNRECFSCNIADSDLDTAILEIPKEDIYRVTDEASNYQITSFLTGAIDSGTGYAARKLGKIIAGKTGTSNDSKDTWFIGFTPKIVVGSYVGYDTPKELGKKATGSNVVLPIFIDFMNHAYKDEPSLPFKVPDSIKLIAVDRITGKMIPNGTVIEAFKVNNIQMLENDYMIDNHDIFDYVPGMLDQSQEIY</sequence>
<reference key="1">
    <citation type="journal article" date="1998" name="Nature">
        <title>The genome sequence of Rickettsia prowazekii and the origin of mitochondria.</title>
        <authorList>
            <person name="Andersson S.G.E."/>
            <person name="Zomorodipour A."/>
            <person name="Andersson J.O."/>
            <person name="Sicheritz-Ponten T."/>
            <person name="Alsmark U.C.M."/>
            <person name="Podowski R.M."/>
            <person name="Naeslund A.K."/>
            <person name="Eriksson A.-S."/>
            <person name="Winkler H.H."/>
            <person name="Kurland C.G."/>
        </authorList>
    </citation>
    <scope>NUCLEOTIDE SEQUENCE [LARGE SCALE GENOMIC DNA]</scope>
    <source>
        <strain>Madrid E</strain>
    </source>
</reference>
<proteinExistence type="inferred from homology"/>
<name>PBPA_RICPR</name>
<dbReference type="EC" id="2.4.99.28" evidence="2"/>
<dbReference type="EC" id="3.4.16.4" evidence="2"/>
<dbReference type="EMBL" id="AJ235273">
    <property type="protein sequence ID" value="CAA15233.1"/>
    <property type="molecule type" value="Genomic_DNA"/>
</dbReference>
<dbReference type="PIR" id="A71642">
    <property type="entry name" value="A71642"/>
</dbReference>
<dbReference type="RefSeq" id="NP_221157.1">
    <property type="nucleotide sequence ID" value="NC_000963.1"/>
</dbReference>
<dbReference type="RefSeq" id="WP_004599661.1">
    <property type="nucleotide sequence ID" value="NC_000963.1"/>
</dbReference>
<dbReference type="SMR" id="Q9ZCE9"/>
<dbReference type="STRING" id="272947.gene:17555876"/>
<dbReference type="CAZy" id="GT51">
    <property type="family name" value="Glycosyltransferase Family 51"/>
</dbReference>
<dbReference type="EnsemblBacteria" id="CAA15233">
    <property type="protein sequence ID" value="CAA15233"/>
    <property type="gene ID" value="CAA15233"/>
</dbReference>
<dbReference type="KEGG" id="rpr:RP807"/>
<dbReference type="PATRIC" id="fig|272947.5.peg.843"/>
<dbReference type="eggNOG" id="COG5009">
    <property type="taxonomic scope" value="Bacteria"/>
</dbReference>
<dbReference type="HOGENOM" id="CLU_006354_2_4_5"/>
<dbReference type="OrthoDB" id="9766909at2"/>
<dbReference type="UniPathway" id="UPA00219"/>
<dbReference type="Proteomes" id="UP000002480">
    <property type="component" value="Chromosome"/>
</dbReference>
<dbReference type="GO" id="GO:0030288">
    <property type="term" value="C:outer membrane-bounded periplasmic space"/>
    <property type="evidence" value="ECO:0007669"/>
    <property type="project" value="TreeGrafter"/>
</dbReference>
<dbReference type="GO" id="GO:0005886">
    <property type="term" value="C:plasma membrane"/>
    <property type="evidence" value="ECO:0007669"/>
    <property type="project" value="UniProtKB-SubCell"/>
</dbReference>
<dbReference type="GO" id="GO:0008658">
    <property type="term" value="F:penicillin binding"/>
    <property type="evidence" value="ECO:0007669"/>
    <property type="project" value="InterPro"/>
</dbReference>
<dbReference type="GO" id="GO:0008955">
    <property type="term" value="F:peptidoglycan glycosyltransferase activity"/>
    <property type="evidence" value="ECO:0007669"/>
    <property type="project" value="RHEA"/>
</dbReference>
<dbReference type="GO" id="GO:0009002">
    <property type="term" value="F:serine-type D-Ala-D-Ala carboxypeptidase activity"/>
    <property type="evidence" value="ECO:0007669"/>
    <property type="project" value="UniProtKB-EC"/>
</dbReference>
<dbReference type="GO" id="GO:0071555">
    <property type="term" value="P:cell wall organization"/>
    <property type="evidence" value="ECO:0007669"/>
    <property type="project" value="UniProtKB-KW"/>
</dbReference>
<dbReference type="GO" id="GO:0009252">
    <property type="term" value="P:peptidoglycan biosynthetic process"/>
    <property type="evidence" value="ECO:0007669"/>
    <property type="project" value="UniProtKB-UniPathway"/>
</dbReference>
<dbReference type="GO" id="GO:0006508">
    <property type="term" value="P:proteolysis"/>
    <property type="evidence" value="ECO:0007669"/>
    <property type="project" value="UniProtKB-KW"/>
</dbReference>
<dbReference type="GO" id="GO:0008360">
    <property type="term" value="P:regulation of cell shape"/>
    <property type="evidence" value="ECO:0007669"/>
    <property type="project" value="UniProtKB-KW"/>
</dbReference>
<dbReference type="GO" id="GO:0046677">
    <property type="term" value="P:response to antibiotic"/>
    <property type="evidence" value="ECO:0007669"/>
    <property type="project" value="UniProtKB-KW"/>
</dbReference>
<dbReference type="FunFam" id="1.10.3810.10:FF:000003">
    <property type="entry name" value="Penicillin-binding protein 1a"/>
    <property type="match status" value="1"/>
</dbReference>
<dbReference type="Gene3D" id="1.10.3810.10">
    <property type="entry name" value="Biosynthetic peptidoglycan transglycosylase-like"/>
    <property type="match status" value="1"/>
</dbReference>
<dbReference type="Gene3D" id="3.40.710.10">
    <property type="entry name" value="DD-peptidase/beta-lactamase superfamily"/>
    <property type="match status" value="2"/>
</dbReference>
<dbReference type="InterPro" id="IPR012338">
    <property type="entry name" value="Beta-lactam/transpept-like"/>
</dbReference>
<dbReference type="InterPro" id="IPR001264">
    <property type="entry name" value="Glyco_trans_51"/>
</dbReference>
<dbReference type="InterPro" id="IPR050396">
    <property type="entry name" value="Glycosyltr_51/Transpeptidase"/>
</dbReference>
<dbReference type="InterPro" id="IPR023346">
    <property type="entry name" value="Lysozyme-like_dom_sf"/>
</dbReference>
<dbReference type="InterPro" id="IPR036950">
    <property type="entry name" value="PBP_transglycosylase"/>
</dbReference>
<dbReference type="InterPro" id="IPR031376">
    <property type="entry name" value="PCB_OB"/>
</dbReference>
<dbReference type="InterPro" id="IPR001460">
    <property type="entry name" value="PCN-bd_Tpept"/>
</dbReference>
<dbReference type="NCBIfam" id="TIGR02074">
    <property type="entry name" value="PBP_1a_fam"/>
    <property type="match status" value="1"/>
</dbReference>
<dbReference type="PANTHER" id="PTHR32282">
    <property type="entry name" value="BINDING PROTEIN TRANSPEPTIDASE, PUTATIVE-RELATED"/>
    <property type="match status" value="1"/>
</dbReference>
<dbReference type="PANTHER" id="PTHR32282:SF27">
    <property type="entry name" value="PENICILLIN-BINDING PROTEIN 1A"/>
    <property type="match status" value="1"/>
</dbReference>
<dbReference type="Pfam" id="PF17092">
    <property type="entry name" value="PCB_OB"/>
    <property type="match status" value="1"/>
</dbReference>
<dbReference type="Pfam" id="PF00912">
    <property type="entry name" value="Transgly"/>
    <property type="match status" value="1"/>
</dbReference>
<dbReference type="Pfam" id="PF00905">
    <property type="entry name" value="Transpeptidase"/>
    <property type="match status" value="1"/>
</dbReference>
<dbReference type="SUPFAM" id="SSF56601">
    <property type="entry name" value="beta-lactamase/transpeptidase-like"/>
    <property type="match status" value="1"/>
</dbReference>
<dbReference type="SUPFAM" id="SSF53955">
    <property type="entry name" value="Lysozyme-like"/>
    <property type="match status" value="1"/>
</dbReference>
<keyword id="KW-0046">Antibiotic resistance</keyword>
<keyword id="KW-0121">Carboxypeptidase</keyword>
<keyword id="KW-0997">Cell inner membrane</keyword>
<keyword id="KW-1003">Cell membrane</keyword>
<keyword id="KW-0133">Cell shape</keyword>
<keyword id="KW-0961">Cell wall biogenesis/degradation</keyword>
<keyword id="KW-0328">Glycosyltransferase</keyword>
<keyword id="KW-0378">Hydrolase</keyword>
<keyword id="KW-0472">Membrane</keyword>
<keyword id="KW-0511">Multifunctional enzyme</keyword>
<keyword id="KW-0573">Peptidoglycan synthesis</keyword>
<keyword id="KW-0645">Protease</keyword>
<keyword id="KW-1185">Reference proteome</keyword>
<keyword id="KW-0735">Signal-anchor</keyword>
<keyword id="KW-0808">Transferase</keyword>
<keyword id="KW-0812">Transmembrane</keyword>
<keyword id="KW-1133">Transmembrane helix</keyword>
<evidence type="ECO:0000250" key="1"/>
<evidence type="ECO:0000250" key="2">
    <source>
        <dbReference type="UniProtKB" id="P02918"/>
    </source>
</evidence>
<evidence type="ECO:0000250" key="3">
    <source>
        <dbReference type="UniProtKB" id="P02919"/>
    </source>
</evidence>
<evidence type="ECO:0000255" key="4"/>
<evidence type="ECO:0000305" key="5"/>
<comment type="function">
    <text evidence="1">Cell wall formation. Synthesis of cross-linked peptidoglycan from the lipid intermediates. The enzyme has a penicillin-insensitive transglycosylase N-terminal domain (formation of linear glycan strands) and a penicillin-sensitive transpeptidase C-terminal domain (cross-linking of the peptide subunits).</text>
</comment>
<comment type="catalytic activity">
    <reaction evidence="2">
        <text>[GlcNAc-(1-&gt;4)-Mur2Ac(oyl-L-Ala-gamma-D-Glu-L-Lys-D-Ala-D-Ala)](n)-di-trans,octa-cis-undecaprenyl diphosphate + beta-D-GlcNAc-(1-&gt;4)-Mur2Ac(oyl-L-Ala-gamma-D-Glu-L-Lys-D-Ala-D-Ala)-di-trans,octa-cis-undecaprenyl diphosphate = [GlcNAc-(1-&gt;4)-Mur2Ac(oyl-L-Ala-gamma-D-Glu-L-Lys-D-Ala-D-Ala)](n+1)-di-trans,octa-cis-undecaprenyl diphosphate + di-trans,octa-cis-undecaprenyl diphosphate + H(+)</text>
        <dbReference type="Rhea" id="RHEA:23708"/>
        <dbReference type="Rhea" id="RHEA-COMP:9602"/>
        <dbReference type="Rhea" id="RHEA-COMP:9603"/>
        <dbReference type="ChEBI" id="CHEBI:15378"/>
        <dbReference type="ChEBI" id="CHEBI:58405"/>
        <dbReference type="ChEBI" id="CHEBI:60033"/>
        <dbReference type="ChEBI" id="CHEBI:78435"/>
        <dbReference type="EC" id="2.4.99.28"/>
    </reaction>
</comment>
<comment type="catalytic activity">
    <reaction evidence="2">
        <text>Preferential cleavage: (Ac)2-L-Lys-D-Ala-|-D-Ala. Also transpeptidation of peptidyl-alanyl moieties that are N-acyl substituents of D-alanine.</text>
        <dbReference type="EC" id="3.4.16.4"/>
    </reaction>
</comment>
<comment type="pathway">
    <text>Cell wall biogenesis; peptidoglycan biosynthesis.</text>
</comment>
<comment type="subcellular location">
    <subcellularLocation>
        <location evidence="1">Cell inner membrane</location>
        <topology evidence="1">Single-pass type II membrane protein</topology>
    </subcellularLocation>
</comment>
<comment type="similarity">
    <text evidence="5">In the N-terminal section; belongs to the glycosyltransferase 51 family.</text>
</comment>
<comment type="similarity">
    <text evidence="5">In the C-terminal section; belongs to the transpeptidase family.</text>
</comment>
<organism>
    <name type="scientific">Rickettsia prowazekii (strain Madrid E)</name>
    <dbReference type="NCBI Taxonomy" id="272947"/>
    <lineage>
        <taxon>Bacteria</taxon>
        <taxon>Pseudomonadati</taxon>
        <taxon>Pseudomonadota</taxon>
        <taxon>Alphaproteobacteria</taxon>
        <taxon>Rickettsiales</taxon>
        <taxon>Rickettsiaceae</taxon>
        <taxon>Rickettsieae</taxon>
        <taxon>Rickettsia</taxon>
        <taxon>typhus group</taxon>
    </lineage>
</organism>
<protein>
    <recommendedName>
        <fullName>Penicillin-binding protein 1A</fullName>
        <shortName>PBP-1a</shortName>
        <shortName>PBP1a</shortName>
    </recommendedName>
    <domain>
        <recommendedName>
            <fullName>Penicillin-insensitive transglycosylase</fullName>
            <ecNumber evidence="2">2.4.99.28</ecNumber>
        </recommendedName>
        <alternativeName>
            <fullName>Peptidoglycan TGase</fullName>
        </alternativeName>
    </domain>
    <domain>
        <recommendedName>
            <fullName>Penicillin-sensitive transpeptidase</fullName>
            <ecNumber evidence="2">3.4.16.4</ecNumber>
        </recommendedName>
        <alternativeName>
            <fullName>DD-transpeptidase</fullName>
        </alternativeName>
    </domain>
</protein>